<organism>
    <name type="scientific">Levilactobacillus brevis (strain ATCC 367 / BCRC 12310 / CIP 105137 / JCM 1170 / LMG 11437 / NCIMB 947 / NCTC 947)</name>
    <name type="common">Lactobacillus brevis</name>
    <dbReference type="NCBI Taxonomy" id="387344"/>
    <lineage>
        <taxon>Bacteria</taxon>
        <taxon>Bacillati</taxon>
        <taxon>Bacillota</taxon>
        <taxon>Bacilli</taxon>
        <taxon>Lactobacillales</taxon>
        <taxon>Lactobacillaceae</taxon>
        <taxon>Levilactobacillus</taxon>
    </lineage>
</organism>
<reference key="1">
    <citation type="journal article" date="2006" name="Proc. Natl. Acad. Sci. U.S.A.">
        <title>Comparative genomics of the lactic acid bacteria.</title>
        <authorList>
            <person name="Makarova K.S."/>
            <person name="Slesarev A."/>
            <person name="Wolf Y.I."/>
            <person name="Sorokin A."/>
            <person name="Mirkin B."/>
            <person name="Koonin E.V."/>
            <person name="Pavlov A."/>
            <person name="Pavlova N."/>
            <person name="Karamychev V."/>
            <person name="Polouchine N."/>
            <person name="Shakhova V."/>
            <person name="Grigoriev I."/>
            <person name="Lou Y."/>
            <person name="Rohksar D."/>
            <person name="Lucas S."/>
            <person name="Huang K."/>
            <person name="Goodstein D.M."/>
            <person name="Hawkins T."/>
            <person name="Plengvidhya V."/>
            <person name="Welker D."/>
            <person name="Hughes J."/>
            <person name="Goh Y."/>
            <person name="Benson A."/>
            <person name="Baldwin K."/>
            <person name="Lee J.-H."/>
            <person name="Diaz-Muniz I."/>
            <person name="Dosti B."/>
            <person name="Smeianov V."/>
            <person name="Wechter W."/>
            <person name="Barabote R."/>
            <person name="Lorca G."/>
            <person name="Altermann E."/>
            <person name="Barrangou R."/>
            <person name="Ganesan B."/>
            <person name="Xie Y."/>
            <person name="Rawsthorne H."/>
            <person name="Tamir D."/>
            <person name="Parker C."/>
            <person name="Breidt F."/>
            <person name="Broadbent J.R."/>
            <person name="Hutkins R."/>
            <person name="O'Sullivan D."/>
            <person name="Steele J."/>
            <person name="Unlu G."/>
            <person name="Saier M.H. Jr."/>
            <person name="Klaenhammer T."/>
            <person name="Richardson P."/>
            <person name="Kozyavkin S."/>
            <person name="Weimer B.C."/>
            <person name="Mills D.A."/>
        </authorList>
    </citation>
    <scope>NUCLEOTIDE SEQUENCE [LARGE SCALE GENOMIC DNA]</scope>
    <source>
        <strain>ATCC 367 / BCRC 12310 / CIP 105137 / JCM 1170 / LMG 11437 / NCIMB 947 / NCTC 947</strain>
    </source>
</reference>
<protein>
    <recommendedName>
        <fullName evidence="1">D-aminoacyl-tRNA deacylase</fullName>
        <shortName evidence="1">DTD</shortName>
        <ecNumber evidence="1">3.1.1.96</ecNumber>
    </recommendedName>
    <alternativeName>
        <fullName evidence="1">Gly-tRNA(Ala) deacylase</fullName>
    </alternativeName>
</protein>
<sequence length="147" mass="15827">MRVLLQRVSQASVSIDDTVHGQIGSGFLLLVGAQDQDTSEQIDYLVHKISHLRVFEDDAGKMNLSINDVGGQILSVSQFTLYANTKKGNRPSFVGAGDPQHASQIYDEFNQKLAATGLTVATGVFGADMQVALVNDGPVTIWFDTDA</sequence>
<name>DTD_LEVBA</name>
<proteinExistence type="inferred from homology"/>
<dbReference type="EC" id="3.1.1.96" evidence="1"/>
<dbReference type="EMBL" id="CP000416">
    <property type="protein sequence ID" value="ABJ63872.1"/>
    <property type="molecule type" value="Genomic_DNA"/>
</dbReference>
<dbReference type="RefSeq" id="WP_011667503.1">
    <property type="nucleotide sequence ID" value="NC_008497.1"/>
</dbReference>
<dbReference type="SMR" id="Q03SF0"/>
<dbReference type="STRING" id="387344.LVIS_0729"/>
<dbReference type="KEGG" id="lbr:LVIS_0729"/>
<dbReference type="PATRIC" id="fig|387344.15.peg.703"/>
<dbReference type="eggNOG" id="COG1490">
    <property type="taxonomic scope" value="Bacteria"/>
</dbReference>
<dbReference type="HOGENOM" id="CLU_076901_1_0_9"/>
<dbReference type="Proteomes" id="UP000001652">
    <property type="component" value="Chromosome"/>
</dbReference>
<dbReference type="GO" id="GO:0005737">
    <property type="term" value="C:cytoplasm"/>
    <property type="evidence" value="ECO:0007669"/>
    <property type="project" value="UniProtKB-SubCell"/>
</dbReference>
<dbReference type="GO" id="GO:0051500">
    <property type="term" value="F:D-tyrosyl-tRNA(Tyr) deacylase activity"/>
    <property type="evidence" value="ECO:0007669"/>
    <property type="project" value="TreeGrafter"/>
</dbReference>
<dbReference type="GO" id="GO:0106026">
    <property type="term" value="F:Gly-tRNA(Ala) deacylase activity"/>
    <property type="evidence" value="ECO:0007669"/>
    <property type="project" value="UniProtKB-UniRule"/>
</dbReference>
<dbReference type="GO" id="GO:0043908">
    <property type="term" value="F:Ser(Gly)-tRNA(Ala) hydrolase activity"/>
    <property type="evidence" value="ECO:0007669"/>
    <property type="project" value="UniProtKB-UniRule"/>
</dbReference>
<dbReference type="GO" id="GO:0000049">
    <property type="term" value="F:tRNA binding"/>
    <property type="evidence" value="ECO:0007669"/>
    <property type="project" value="UniProtKB-UniRule"/>
</dbReference>
<dbReference type="GO" id="GO:0019478">
    <property type="term" value="P:D-amino acid catabolic process"/>
    <property type="evidence" value="ECO:0007669"/>
    <property type="project" value="UniProtKB-UniRule"/>
</dbReference>
<dbReference type="CDD" id="cd00563">
    <property type="entry name" value="Dtyr_deacylase"/>
    <property type="match status" value="1"/>
</dbReference>
<dbReference type="FunFam" id="3.50.80.10:FF:000001">
    <property type="entry name" value="D-aminoacyl-tRNA deacylase"/>
    <property type="match status" value="1"/>
</dbReference>
<dbReference type="Gene3D" id="3.50.80.10">
    <property type="entry name" value="D-tyrosyl-tRNA(Tyr) deacylase"/>
    <property type="match status" value="1"/>
</dbReference>
<dbReference type="HAMAP" id="MF_00518">
    <property type="entry name" value="Deacylase_Dtd"/>
    <property type="match status" value="1"/>
</dbReference>
<dbReference type="InterPro" id="IPR003732">
    <property type="entry name" value="Daa-tRNA_deacyls_DTD"/>
</dbReference>
<dbReference type="InterPro" id="IPR023509">
    <property type="entry name" value="DTD-like_sf"/>
</dbReference>
<dbReference type="NCBIfam" id="TIGR00256">
    <property type="entry name" value="D-aminoacyl-tRNA deacylase"/>
    <property type="match status" value="1"/>
</dbReference>
<dbReference type="PANTHER" id="PTHR10472:SF5">
    <property type="entry name" value="D-AMINOACYL-TRNA DEACYLASE 1"/>
    <property type="match status" value="1"/>
</dbReference>
<dbReference type="PANTHER" id="PTHR10472">
    <property type="entry name" value="D-TYROSYL-TRNA TYR DEACYLASE"/>
    <property type="match status" value="1"/>
</dbReference>
<dbReference type="Pfam" id="PF02580">
    <property type="entry name" value="Tyr_Deacylase"/>
    <property type="match status" value="1"/>
</dbReference>
<dbReference type="SUPFAM" id="SSF69500">
    <property type="entry name" value="DTD-like"/>
    <property type="match status" value="1"/>
</dbReference>
<evidence type="ECO:0000255" key="1">
    <source>
        <dbReference type="HAMAP-Rule" id="MF_00518"/>
    </source>
</evidence>
<keyword id="KW-0963">Cytoplasm</keyword>
<keyword id="KW-0378">Hydrolase</keyword>
<keyword id="KW-1185">Reference proteome</keyword>
<keyword id="KW-0694">RNA-binding</keyword>
<keyword id="KW-0820">tRNA-binding</keyword>
<gene>
    <name evidence="1" type="primary">dtd</name>
    <name type="ordered locus">LVIS_0729</name>
</gene>
<accession>Q03SF0</accession>
<feature type="chain" id="PRO_1000050842" description="D-aminoacyl-tRNA deacylase">
    <location>
        <begin position="1"/>
        <end position="147"/>
    </location>
</feature>
<feature type="short sequence motif" description="Gly-cisPro motif, important for rejection of L-amino acids" evidence="1">
    <location>
        <begin position="137"/>
        <end position="138"/>
    </location>
</feature>
<comment type="function">
    <text evidence="1">An aminoacyl-tRNA editing enzyme that deacylates mischarged D-aminoacyl-tRNAs. Also deacylates mischarged glycyl-tRNA(Ala), protecting cells against glycine mischarging by AlaRS. Acts via tRNA-based rather than protein-based catalysis; rejects L-amino acids rather than detecting D-amino acids in the active site. By recycling D-aminoacyl-tRNA to D-amino acids and free tRNA molecules, this enzyme counteracts the toxicity associated with the formation of D-aminoacyl-tRNA entities in vivo and helps enforce protein L-homochirality.</text>
</comment>
<comment type="catalytic activity">
    <reaction evidence="1">
        <text>glycyl-tRNA(Ala) + H2O = tRNA(Ala) + glycine + H(+)</text>
        <dbReference type="Rhea" id="RHEA:53744"/>
        <dbReference type="Rhea" id="RHEA-COMP:9657"/>
        <dbReference type="Rhea" id="RHEA-COMP:13640"/>
        <dbReference type="ChEBI" id="CHEBI:15377"/>
        <dbReference type="ChEBI" id="CHEBI:15378"/>
        <dbReference type="ChEBI" id="CHEBI:57305"/>
        <dbReference type="ChEBI" id="CHEBI:78442"/>
        <dbReference type="ChEBI" id="CHEBI:78522"/>
        <dbReference type="EC" id="3.1.1.96"/>
    </reaction>
</comment>
<comment type="catalytic activity">
    <reaction evidence="1">
        <text>a D-aminoacyl-tRNA + H2O = a tRNA + a D-alpha-amino acid + H(+)</text>
        <dbReference type="Rhea" id="RHEA:13953"/>
        <dbReference type="Rhea" id="RHEA-COMP:10123"/>
        <dbReference type="Rhea" id="RHEA-COMP:10124"/>
        <dbReference type="ChEBI" id="CHEBI:15377"/>
        <dbReference type="ChEBI" id="CHEBI:15378"/>
        <dbReference type="ChEBI" id="CHEBI:59871"/>
        <dbReference type="ChEBI" id="CHEBI:78442"/>
        <dbReference type="ChEBI" id="CHEBI:79333"/>
        <dbReference type="EC" id="3.1.1.96"/>
    </reaction>
</comment>
<comment type="subunit">
    <text evidence="1">Homodimer.</text>
</comment>
<comment type="subcellular location">
    <subcellularLocation>
        <location evidence="1">Cytoplasm</location>
    </subcellularLocation>
</comment>
<comment type="domain">
    <text evidence="1">A Gly-cisPro motif from one monomer fits into the active site of the other monomer to allow specific chiral rejection of L-amino acids.</text>
</comment>
<comment type="similarity">
    <text evidence="1">Belongs to the DTD family.</text>
</comment>